<accession>P85817</accession>
<feature type="peptide" id="PRO_0000365780" description="Short neuropeptide F" evidence="4">
    <location>
        <begin position="1"/>
        <end position="11"/>
    </location>
</feature>
<feature type="modified residue" description="Phenylalanine amide" evidence="4">
    <location>
        <position position="11"/>
    </location>
</feature>
<feature type="unsure residue" description="L or I" evidence="4">
    <location>
        <position position="7"/>
    </location>
</feature>
<feature type="unsure residue" description="L or I" evidence="4">
    <location>
        <position position="9"/>
    </location>
</feature>
<proteinExistence type="evidence at protein level"/>
<evidence type="ECO:0000250" key="1">
    <source>
        <dbReference type="UniProtKB" id="Q9TWD6"/>
    </source>
</evidence>
<evidence type="ECO:0000250" key="2">
    <source>
        <dbReference type="UniProtKB" id="Q9VIQ0"/>
    </source>
</evidence>
<evidence type="ECO:0000255" key="3"/>
<evidence type="ECO:0000269" key="4">
    <source>
    </source>
</evidence>
<evidence type="ECO:0000303" key="5">
    <source>
    </source>
</evidence>
<evidence type="ECO:0000305" key="6"/>
<protein>
    <recommendedName>
        <fullName evidence="5">Short neuropeptide F</fullName>
        <shortName evidence="5">Rhopr-SNF</shortName>
    </recommendedName>
</protein>
<name>SNPF_RHOPR</name>
<reference evidence="6" key="1">
    <citation type="journal article" date="2009" name="Proteomics">
        <title>The neuropeptidome of Rhodnius prolixus brain.</title>
        <authorList>
            <person name="Ons S."/>
            <person name="Richter F."/>
            <person name="Urlaub H."/>
            <person name="Pomar R.R."/>
        </authorList>
    </citation>
    <scope>PROTEIN SEQUENCE</scope>
    <scope>MASS SPECTROMETRY</scope>
    <scope>AMIDATION AT PHE-11</scope>
    <source>
        <tissue evidence="4">Brain</tissue>
    </source>
</reference>
<comment type="function">
    <text evidence="1">Neuropeptide.</text>
</comment>
<comment type="subcellular location">
    <subcellularLocation>
        <location evidence="2">Secreted</location>
    </subcellularLocation>
</comment>
<comment type="mass spectrometry" mass="1399.79" method="MALDI" evidence="4"/>
<comment type="similarity">
    <text evidence="3">Belongs to the NPY family.</text>
</comment>
<sequence length="11" mass="1401">NNRSPQLRLRF</sequence>
<keyword id="KW-0027">Amidation</keyword>
<keyword id="KW-0903">Direct protein sequencing</keyword>
<keyword id="KW-0527">Neuropeptide</keyword>
<keyword id="KW-1185">Reference proteome</keyword>
<keyword id="KW-0964">Secreted</keyword>
<organism>
    <name type="scientific">Rhodnius prolixus</name>
    <name type="common">Triatomid bug</name>
    <dbReference type="NCBI Taxonomy" id="13249"/>
    <lineage>
        <taxon>Eukaryota</taxon>
        <taxon>Metazoa</taxon>
        <taxon>Ecdysozoa</taxon>
        <taxon>Arthropoda</taxon>
        <taxon>Hexapoda</taxon>
        <taxon>Insecta</taxon>
        <taxon>Pterygota</taxon>
        <taxon>Neoptera</taxon>
        <taxon>Paraneoptera</taxon>
        <taxon>Hemiptera</taxon>
        <taxon>Heteroptera</taxon>
        <taxon>Panheteroptera</taxon>
        <taxon>Cimicomorpha</taxon>
        <taxon>Reduviidae</taxon>
        <taxon>Triatominae</taxon>
        <taxon>Rhodnius</taxon>
    </lineage>
</organism>
<dbReference type="STRING" id="13249.P85817"/>
<dbReference type="InParanoid" id="P85817"/>
<dbReference type="Proteomes" id="UP000015103">
    <property type="component" value="Unassembled WGS sequence"/>
</dbReference>
<dbReference type="GO" id="GO:0005576">
    <property type="term" value="C:extracellular region"/>
    <property type="evidence" value="ECO:0007669"/>
    <property type="project" value="UniProtKB-SubCell"/>
</dbReference>
<dbReference type="GO" id="GO:0007218">
    <property type="term" value="P:neuropeptide signaling pathway"/>
    <property type="evidence" value="ECO:0007669"/>
    <property type="project" value="UniProtKB-KW"/>
</dbReference>